<feature type="signal peptide" evidence="1">
    <location>
        <begin position="1"/>
        <end position="28"/>
    </location>
</feature>
<feature type="chain" id="PRO_0000024920" description="Alginate lyase">
    <location>
        <begin position="29"/>
        <end position="371"/>
    </location>
</feature>
<feature type="binding site" evidence="1">
    <location>
        <begin position="67"/>
        <end position="68"/>
    </location>
    <ligand>
        <name>substrate</name>
    </ligand>
</feature>
<feature type="binding site" evidence="1">
    <location>
        <begin position="140"/>
        <end position="141"/>
    </location>
    <ligand>
        <name>substrate</name>
    </ligand>
</feature>
<feature type="binding site" evidence="1">
    <location>
        <position position="258"/>
    </location>
    <ligand>
        <name>substrate</name>
    </ligand>
</feature>
<gene>
    <name evidence="1" type="primary">algL</name>
    <name type="ordered locus">PP_1281</name>
</gene>
<proteinExistence type="inferred from homology"/>
<comment type="function">
    <text evidence="1">Catalyzes the depolymerization of alginate by cleaving the beta-1,4 glycosidic bond between two adjacent sugar residues via a beta-elimination mechanism. May serve to degrade mislocalized alginate that is trapped in the periplasmic space.</text>
</comment>
<comment type="catalytic activity">
    <reaction evidence="1">
        <text>Eliminative cleavage of alginate to give oligosaccharides with 4-deoxy-alpha-L-erythro-hex-4-enuronosyl groups at their non-reducing ends and beta-D-mannuronate at their reducing end.</text>
        <dbReference type="EC" id="4.2.2.3"/>
    </reaction>
</comment>
<comment type="subcellular location">
    <subcellularLocation>
        <location evidence="1">Periplasm</location>
    </subcellularLocation>
</comment>
<comment type="similarity">
    <text evidence="1">Belongs to the polysaccharide lyase 5 family.</text>
</comment>
<evidence type="ECO:0000255" key="1">
    <source>
        <dbReference type="HAMAP-Rule" id="MF_00557"/>
    </source>
</evidence>
<dbReference type="EC" id="4.2.2.3" evidence="1"/>
<dbReference type="EMBL" id="AE015451">
    <property type="protein sequence ID" value="AAN66905.1"/>
    <property type="molecule type" value="Genomic_DNA"/>
</dbReference>
<dbReference type="RefSeq" id="NP_743441.1">
    <property type="nucleotide sequence ID" value="NC_002947.4"/>
</dbReference>
<dbReference type="SMR" id="Q88ND1"/>
<dbReference type="STRING" id="160488.PP_1281"/>
<dbReference type="CAZy" id="PL5">
    <property type="family name" value="Polysaccharide Lyase Family 5"/>
</dbReference>
<dbReference type="PaxDb" id="160488-PP_1281"/>
<dbReference type="KEGG" id="ppu:PP_1281"/>
<dbReference type="PATRIC" id="fig|160488.4.peg.1358"/>
<dbReference type="eggNOG" id="ENOG502ZAMJ">
    <property type="taxonomic scope" value="Bacteria"/>
</dbReference>
<dbReference type="HOGENOM" id="CLU_064286_0_0_6"/>
<dbReference type="OrthoDB" id="6972889at2"/>
<dbReference type="PhylomeDB" id="Q88ND1"/>
<dbReference type="BioCyc" id="PPUT160488:G1G01-1368-MONOMER"/>
<dbReference type="Proteomes" id="UP000000556">
    <property type="component" value="Chromosome"/>
</dbReference>
<dbReference type="GO" id="GO:0042597">
    <property type="term" value="C:periplasmic space"/>
    <property type="evidence" value="ECO:0007669"/>
    <property type="project" value="UniProtKB-SubCell"/>
</dbReference>
<dbReference type="GO" id="GO:0045135">
    <property type="term" value="F:poly(beta-D-mannuronate) lyase activity"/>
    <property type="evidence" value="ECO:0007669"/>
    <property type="project" value="UniProtKB-UniRule"/>
</dbReference>
<dbReference type="GO" id="GO:0042122">
    <property type="term" value="P:alginic acid catabolic process"/>
    <property type="evidence" value="ECO:0007669"/>
    <property type="project" value="UniProtKB-UniRule"/>
</dbReference>
<dbReference type="CDD" id="cd00244">
    <property type="entry name" value="AlgLyase"/>
    <property type="match status" value="1"/>
</dbReference>
<dbReference type="Gene3D" id="1.50.10.100">
    <property type="entry name" value="Chondroitin AC/alginate lyase"/>
    <property type="match status" value="1"/>
</dbReference>
<dbReference type="HAMAP" id="MF_00557">
    <property type="entry name" value="Alginate_lyase"/>
    <property type="match status" value="1"/>
</dbReference>
<dbReference type="InterPro" id="IPR022859">
    <property type="entry name" value="Alginate_lyase"/>
</dbReference>
<dbReference type="InterPro" id="IPR008397">
    <property type="entry name" value="Alginate_lyase_dom"/>
</dbReference>
<dbReference type="InterPro" id="IPR008929">
    <property type="entry name" value="Chondroitin_lyas"/>
</dbReference>
<dbReference type="NCBIfam" id="NF001467">
    <property type="entry name" value="PRK00325.1-2"/>
    <property type="match status" value="1"/>
</dbReference>
<dbReference type="NCBIfam" id="NF001470">
    <property type="entry name" value="PRK00325.1-5"/>
    <property type="match status" value="1"/>
</dbReference>
<dbReference type="Pfam" id="PF05426">
    <property type="entry name" value="Alginate_lyase"/>
    <property type="match status" value="1"/>
</dbReference>
<dbReference type="SUPFAM" id="SSF48230">
    <property type="entry name" value="Chondroitin AC/alginate lyase"/>
    <property type="match status" value="1"/>
</dbReference>
<sequence>MRRPMTLFKRISSPALLALALFGGAAHAALVPPQGYYQGIEKLKTGDGNFRCEAAPQPYTGPLQFRSKYEGSDKARATLNAASEKAFRKSTEDITTLEKGVSKMVGQYMRDGRPAQLDCTLTWLGTWARAGALLSTDYNHTGKSMRKWALGSMSGSWLRLKFSNSQPLAAHQAEADLIEKWLTRLAEQTVRDWSDLPLEKINNHSYWAAWSVMATAVATDRRDLFDWAVKEYKVGANQVDDQGFLPNEIKRQQRALAYHNYALPPLAMIASFAQANGVDLRAENNFALQRLGEGVLAGARDPSHFKARAGKKQDMTDLKVDSKYSWLEPWCALYHCVGDTLERKHDMQPFNSFRLGGDVTRVYDPSAESKK</sequence>
<name>ALGL_PSEPK</name>
<accession>Q88ND1</accession>
<reference key="1">
    <citation type="journal article" date="2002" name="Environ. Microbiol.">
        <title>Complete genome sequence and comparative analysis of the metabolically versatile Pseudomonas putida KT2440.</title>
        <authorList>
            <person name="Nelson K.E."/>
            <person name="Weinel C."/>
            <person name="Paulsen I.T."/>
            <person name="Dodson R.J."/>
            <person name="Hilbert H."/>
            <person name="Martins dos Santos V.A.P."/>
            <person name="Fouts D.E."/>
            <person name="Gill S.R."/>
            <person name="Pop M."/>
            <person name="Holmes M."/>
            <person name="Brinkac L.M."/>
            <person name="Beanan M.J."/>
            <person name="DeBoy R.T."/>
            <person name="Daugherty S.C."/>
            <person name="Kolonay J.F."/>
            <person name="Madupu R."/>
            <person name="Nelson W.C."/>
            <person name="White O."/>
            <person name="Peterson J.D."/>
            <person name="Khouri H.M."/>
            <person name="Hance I."/>
            <person name="Chris Lee P."/>
            <person name="Holtzapple E.K."/>
            <person name="Scanlan D."/>
            <person name="Tran K."/>
            <person name="Moazzez A."/>
            <person name="Utterback T.R."/>
            <person name="Rizzo M."/>
            <person name="Lee K."/>
            <person name="Kosack D."/>
            <person name="Moestl D."/>
            <person name="Wedler H."/>
            <person name="Lauber J."/>
            <person name="Stjepandic D."/>
            <person name="Hoheisel J."/>
            <person name="Straetz M."/>
            <person name="Heim S."/>
            <person name="Kiewitz C."/>
            <person name="Eisen J.A."/>
            <person name="Timmis K.N."/>
            <person name="Duesterhoeft A."/>
            <person name="Tuemmler B."/>
            <person name="Fraser C.M."/>
        </authorList>
    </citation>
    <scope>NUCLEOTIDE SEQUENCE [LARGE SCALE GENOMIC DNA]</scope>
    <source>
        <strain>ATCC 47054 / DSM 6125 / CFBP 8728 / NCIMB 11950 / KT2440</strain>
    </source>
</reference>
<keyword id="KW-0456">Lyase</keyword>
<keyword id="KW-0574">Periplasm</keyword>
<keyword id="KW-1185">Reference proteome</keyword>
<keyword id="KW-0732">Signal</keyword>
<organism>
    <name type="scientific">Pseudomonas putida (strain ATCC 47054 / DSM 6125 / CFBP 8728 / NCIMB 11950 / KT2440)</name>
    <dbReference type="NCBI Taxonomy" id="160488"/>
    <lineage>
        <taxon>Bacteria</taxon>
        <taxon>Pseudomonadati</taxon>
        <taxon>Pseudomonadota</taxon>
        <taxon>Gammaproteobacteria</taxon>
        <taxon>Pseudomonadales</taxon>
        <taxon>Pseudomonadaceae</taxon>
        <taxon>Pseudomonas</taxon>
    </lineage>
</organism>
<protein>
    <recommendedName>
        <fullName evidence="1">Alginate lyase</fullName>
        <ecNumber evidence="1">4.2.2.3</ecNumber>
    </recommendedName>
    <alternativeName>
        <fullName evidence="1">Poly(beta-D-mannuronate) lyase</fullName>
    </alternativeName>
</protein>